<organism>
    <name type="scientific">Lachnoclostridium phytofermentans (strain ATCC 700394 / DSM 18823 / ISDg)</name>
    <name type="common">Clostridium phytofermentans</name>
    <dbReference type="NCBI Taxonomy" id="357809"/>
    <lineage>
        <taxon>Bacteria</taxon>
        <taxon>Bacillati</taxon>
        <taxon>Bacillota</taxon>
        <taxon>Clostridia</taxon>
        <taxon>Lachnospirales</taxon>
        <taxon>Lachnospiraceae</taxon>
    </lineage>
</organism>
<protein>
    <recommendedName>
        <fullName evidence="1">Co-chaperonin GroES</fullName>
    </recommendedName>
    <alternativeName>
        <fullName evidence="1">10 kDa chaperonin</fullName>
    </alternativeName>
    <alternativeName>
        <fullName evidence="1">Chaperonin-10</fullName>
        <shortName evidence="1">Cpn10</shortName>
    </alternativeName>
</protein>
<dbReference type="EMBL" id="CP000885">
    <property type="protein sequence ID" value="ABX43644.1"/>
    <property type="molecule type" value="Genomic_DNA"/>
</dbReference>
<dbReference type="RefSeq" id="WP_012201293.1">
    <property type="nucleotide sequence ID" value="NC_010001.1"/>
</dbReference>
<dbReference type="SMR" id="A9KSJ2"/>
<dbReference type="STRING" id="357809.Cphy_3290"/>
<dbReference type="KEGG" id="cpy:Cphy_3290"/>
<dbReference type="eggNOG" id="COG0234">
    <property type="taxonomic scope" value="Bacteria"/>
</dbReference>
<dbReference type="HOGENOM" id="CLU_132825_2_0_9"/>
<dbReference type="OrthoDB" id="9806791at2"/>
<dbReference type="Proteomes" id="UP000000370">
    <property type="component" value="Chromosome"/>
</dbReference>
<dbReference type="GO" id="GO:0005737">
    <property type="term" value="C:cytoplasm"/>
    <property type="evidence" value="ECO:0007669"/>
    <property type="project" value="UniProtKB-SubCell"/>
</dbReference>
<dbReference type="GO" id="GO:0005524">
    <property type="term" value="F:ATP binding"/>
    <property type="evidence" value="ECO:0007669"/>
    <property type="project" value="InterPro"/>
</dbReference>
<dbReference type="GO" id="GO:0046872">
    <property type="term" value="F:metal ion binding"/>
    <property type="evidence" value="ECO:0007669"/>
    <property type="project" value="TreeGrafter"/>
</dbReference>
<dbReference type="GO" id="GO:0044183">
    <property type="term" value="F:protein folding chaperone"/>
    <property type="evidence" value="ECO:0007669"/>
    <property type="project" value="InterPro"/>
</dbReference>
<dbReference type="GO" id="GO:0051087">
    <property type="term" value="F:protein-folding chaperone binding"/>
    <property type="evidence" value="ECO:0007669"/>
    <property type="project" value="TreeGrafter"/>
</dbReference>
<dbReference type="GO" id="GO:0051082">
    <property type="term" value="F:unfolded protein binding"/>
    <property type="evidence" value="ECO:0007669"/>
    <property type="project" value="TreeGrafter"/>
</dbReference>
<dbReference type="GO" id="GO:0051085">
    <property type="term" value="P:chaperone cofactor-dependent protein refolding"/>
    <property type="evidence" value="ECO:0007669"/>
    <property type="project" value="TreeGrafter"/>
</dbReference>
<dbReference type="CDD" id="cd00320">
    <property type="entry name" value="cpn10"/>
    <property type="match status" value="1"/>
</dbReference>
<dbReference type="FunFam" id="2.30.33.40:FF:000001">
    <property type="entry name" value="10 kDa chaperonin"/>
    <property type="match status" value="1"/>
</dbReference>
<dbReference type="Gene3D" id="2.30.33.40">
    <property type="entry name" value="GroES chaperonin"/>
    <property type="match status" value="1"/>
</dbReference>
<dbReference type="HAMAP" id="MF_00580">
    <property type="entry name" value="CH10"/>
    <property type="match status" value="1"/>
</dbReference>
<dbReference type="InterPro" id="IPR020818">
    <property type="entry name" value="Chaperonin_GroES"/>
</dbReference>
<dbReference type="InterPro" id="IPR037124">
    <property type="entry name" value="Chaperonin_GroES_sf"/>
</dbReference>
<dbReference type="InterPro" id="IPR018369">
    <property type="entry name" value="Chaprnonin_Cpn10_CS"/>
</dbReference>
<dbReference type="InterPro" id="IPR011032">
    <property type="entry name" value="GroES-like_sf"/>
</dbReference>
<dbReference type="NCBIfam" id="NF001531">
    <property type="entry name" value="PRK00364.2-2"/>
    <property type="match status" value="1"/>
</dbReference>
<dbReference type="NCBIfam" id="NF001533">
    <property type="entry name" value="PRK00364.2-4"/>
    <property type="match status" value="1"/>
</dbReference>
<dbReference type="PANTHER" id="PTHR10772">
    <property type="entry name" value="10 KDA HEAT SHOCK PROTEIN"/>
    <property type="match status" value="1"/>
</dbReference>
<dbReference type="PANTHER" id="PTHR10772:SF58">
    <property type="entry name" value="CO-CHAPERONIN GROES"/>
    <property type="match status" value="1"/>
</dbReference>
<dbReference type="Pfam" id="PF00166">
    <property type="entry name" value="Cpn10"/>
    <property type="match status" value="1"/>
</dbReference>
<dbReference type="PRINTS" id="PR00297">
    <property type="entry name" value="CHAPERONIN10"/>
</dbReference>
<dbReference type="SMART" id="SM00883">
    <property type="entry name" value="Cpn10"/>
    <property type="match status" value="1"/>
</dbReference>
<dbReference type="SUPFAM" id="SSF50129">
    <property type="entry name" value="GroES-like"/>
    <property type="match status" value="1"/>
</dbReference>
<dbReference type="PROSITE" id="PS00681">
    <property type="entry name" value="CHAPERONINS_CPN10"/>
    <property type="match status" value="1"/>
</dbReference>
<feature type="chain" id="PRO_1000082371" description="Co-chaperonin GroES">
    <location>
        <begin position="1"/>
        <end position="95"/>
    </location>
</feature>
<name>CH10_LACP7</name>
<proteinExistence type="inferred from homology"/>
<keyword id="KW-0143">Chaperone</keyword>
<keyword id="KW-0963">Cytoplasm</keyword>
<keyword id="KW-1185">Reference proteome</keyword>
<comment type="function">
    <text evidence="1">Together with the chaperonin GroEL, plays an essential role in assisting protein folding. The GroEL-GroES system forms a nano-cage that allows encapsulation of the non-native substrate proteins and provides a physical environment optimized to promote and accelerate protein folding. GroES binds to the apical surface of the GroEL ring, thereby capping the opening of the GroEL channel.</text>
</comment>
<comment type="subunit">
    <text evidence="1">Heptamer of 7 subunits arranged in a ring. Interacts with the chaperonin GroEL.</text>
</comment>
<comment type="subcellular location">
    <subcellularLocation>
        <location evidence="1">Cytoplasm</location>
    </subcellularLocation>
</comment>
<comment type="similarity">
    <text evidence="1">Belongs to the GroES chaperonin family.</text>
</comment>
<reference key="1">
    <citation type="submission" date="2007-11" db="EMBL/GenBank/DDBJ databases">
        <title>Complete genome sequence of Clostridium phytofermentans ISDg.</title>
        <authorList>
            <person name="Leschine S.B."/>
            <person name="Warnick T.A."/>
            <person name="Blanchard J.L."/>
            <person name="Schnell D.J."/>
            <person name="Petit E.L."/>
            <person name="LaTouf W.G."/>
            <person name="Copeland A."/>
            <person name="Lucas S."/>
            <person name="Lapidus A."/>
            <person name="Barry K."/>
            <person name="Glavina del Rio T."/>
            <person name="Dalin E."/>
            <person name="Tice H."/>
            <person name="Pitluck S."/>
            <person name="Kiss H."/>
            <person name="Brettin T."/>
            <person name="Bruce D."/>
            <person name="Detter J.C."/>
            <person name="Han C."/>
            <person name="Kuske C."/>
            <person name="Schmutz J."/>
            <person name="Larimer F."/>
            <person name="Land M."/>
            <person name="Hauser L."/>
            <person name="Kyrpides N."/>
            <person name="Kim E.A."/>
            <person name="Richardson P."/>
        </authorList>
    </citation>
    <scope>NUCLEOTIDE SEQUENCE [LARGE SCALE GENOMIC DNA]</scope>
    <source>
        <strain>ATCC 700394 / DSM 18823 / ISDg</strain>
    </source>
</reference>
<evidence type="ECO:0000255" key="1">
    <source>
        <dbReference type="HAMAP-Rule" id="MF_00580"/>
    </source>
</evidence>
<sequence>MKLVPLGDKVVLKQLVAEETTKSGIVLPGQAKEKPQQAEVVAVGPGGMVDGKEVTMQVKVGDKVIYSKYAGTEVKLDEEEFIVVKQNDIVAIVAD</sequence>
<accession>A9KSJ2</accession>
<gene>
    <name evidence="1" type="primary">groES</name>
    <name evidence="1" type="synonym">groS</name>
    <name type="ordered locus">Cphy_3290</name>
</gene>